<name>TTCA_ECO24</name>
<keyword id="KW-0004">4Fe-4S</keyword>
<keyword id="KW-0067">ATP-binding</keyword>
<keyword id="KW-0963">Cytoplasm</keyword>
<keyword id="KW-0408">Iron</keyword>
<keyword id="KW-0411">Iron-sulfur</keyword>
<keyword id="KW-0460">Magnesium</keyword>
<keyword id="KW-0479">Metal-binding</keyword>
<keyword id="KW-0547">Nucleotide-binding</keyword>
<keyword id="KW-1185">Reference proteome</keyword>
<keyword id="KW-0694">RNA-binding</keyword>
<keyword id="KW-0808">Transferase</keyword>
<keyword id="KW-0819">tRNA processing</keyword>
<keyword id="KW-0820">tRNA-binding</keyword>
<evidence type="ECO:0000255" key="1">
    <source>
        <dbReference type="HAMAP-Rule" id="MF_01850"/>
    </source>
</evidence>
<organism>
    <name type="scientific">Escherichia coli O139:H28 (strain E24377A / ETEC)</name>
    <dbReference type="NCBI Taxonomy" id="331111"/>
    <lineage>
        <taxon>Bacteria</taxon>
        <taxon>Pseudomonadati</taxon>
        <taxon>Pseudomonadota</taxon>
        <taxon>Gammaproteobacteria</taxon>
        <taxon>Enterobacterales</taxon>
        <taxon>Enterobacteriaceae</taxon>
        <taxon>Escherichia</taxon>
    </lineage>
</organism>
<reference key="1">
    <citation type="journal article" date="2008" name="J. Bacteriol.">
        <title>The pangenome structure of Escherichia coli: comparative genomic analysis of E. coli commensal and pathogenic isolates.</title>
        <authorList>
            <person name="Rasko D.A."/>
            <person name="Rosovitz M.J."/>
            <person name="Myers G.S.A."/>
            <person name="Mongodin E.F."/>
            <person name="Fricke W.F."/>
            <person name="Gajer P."/>
            <person name="Crabtree J."/>
            <person name="Sebaihia M."/>
            <person name="Thomson N.R."/>
            <person name="Chaudhuri R."/>
            <person name="Henderson I.R."/>
            <person name="Sperandio V."/>
            <person name="Ravel J."/>
        </authorList>
    </citation>
    <scope>NUCLEOTIDE SEQUENCE [LARGE SCALE GENOMIC DNA]</scope>
    <source>
        <strain>E24377A / ETEC</strain>
    </source>
</reference>
<dbReference type="EC" id="2.8.1.-" evidence="1"/>
<dbReference type="EMBL" id="CP000800">
    <property type="protein sequence ID" value="ABV20891.1"/>
    <property type="molecule type" value="Genomic_DNA"/>
</dbReference>
<dbReference type="RefSeq" id="WP_000081418.1">
    <property type="nucleotide sequence ID" value="NC_009801.1"/>
</dbReference>
<dbReference type="SMR" id="A7ZLH4"/>
<dbReference type="GeneID" id="75171471"/>
<dbReference type="KEGG" id="ecw:EcE24377A_1558"/>
<dbReference type="HOGENOM" id="CLU_026481_0_0_6"/>
<dbReference type="Proteomes" id="UP000001122">
    <property type="component" value="Chromosome"/>
</dbReference>
<dbReference type="GO" id="GO:0005737">
    <property type="term" value="C:cytoplasm"/>
    <property type="evidence" value="ECO:0007669"/>
    <property type="project" value="UniProtKB-SubCell"/>
</dbReference>
<dbReference type="GO" id="GO:0051539">
    <property type="term" value="F:4 iron, 4 sulfur cluster binding"/>
    <property type="evidence" value="ECO:0007669"/>
    <property type="project" value="UniProtKB-UniRule"/>
</dbReference>
<dbReference type="GO" id="GO:0005524">
    <property type="term" value="F:ATP binding"/>
    <property type="evidence" value="ECO:0007669"/>
    <property type="project" value="UniProtKB-UniRule"/>
</dbReference>
<dbReference type="GO" id="GO:0000287">
    <property type="term" value="F:magnesium ion binding"/>
    <property type="evidence" value="ECO:0007669"/>
    <property type="project" value="UniProtKB-UniRule"/>
</dbReference>
<dbReference type="GO" id="GO:0016783">
    <property type="term" value="F:sulfurtransferase activity"/>
    <property type="evidence" value="ECO:0007669"/>
    <property type="project" value="UniProtKB-UniRule"/>
</dbReference>
<dbReference type="GO" id="GO:0000049">
    <property type="term" value="F:tRNA binding"/>
    <property type="evidence" value="ECO:0007669"/>
    <property type="project" value="UniProtKB-KW"/>
</dbReference>
<dbReference type="GO" id="GO:0034227">
    <property type="term" value="P:tRNA thio-modification"/>
    <property type="evidence" value="ECO:0007669"/>
    <property type="project" value="UniProtKB-UniRule"/>
</dbReference>
<dbReference type="CDD" id="cd24138">
    <property type="entry name" value="TtcA-like"/>
    <property type="match status" value="1"/>
</dbReference>
<dbReference type="FunFam" id="3.40.50.620:FF:000046">
    <property type="entry name" value="tRNA-cytidine(32) 2-sulfurtransferase"/>
    <property type="match status" value="1"/>
</dbReference>
<dbReference type="Gene3D" id="3.40.50.620">
    <property type="entry name" value="HUPs"/>
    <property type="match status" value="1"/>
</dbReference>
<dbReference type="HAMAP" id="MF_01850">
    <property type="entry name" value="TtcA"/>
    <property type="match status" value="1"/>
</dbReference>
<dbReference type="InterPro" id="IPR014729">
    <property type="entry name" value="Rossmann-like_a/b/a_fold"/>
</dbReference>
<dbReference type="InterPro" id="IPR011063">
    <property type="entry name" value="TilS/TtcA_N"/>
</dbReference>
<dbReference type="InterPro" id="IPR012089">
    <property type="entry name" value="tRNA_Cyd_32_2_STrfase"/>
</dbReference>
<dbReference type="InterPro" id="IPR035107">
    <property type="entry name" value="tRNA_thiolation_TtcA_Ctu1"/>
</dbReference>
<dbReference type="NCBIfam" id="NF007972">
    <property type="entry name" value="PRK10696.1"/>
    <property type="match status" value="1"/>
</dbReference>
<dbReference type="PANTHER" id="PTHR43686:SF1">
    <property type="entry name" value="AMINOTRAN_5 DOMAIN-CONTAINING PROTEIN"/>
    <property type="match status" value="1"/>
</dbReference>
<dbReference type="PANTHER" id="PTHR43686">
    <property type="entry name" value="SULFURTRANSFERASE-RELATED"/>
    <property type="match status" value="1"/>
</dbReference>
<dbReference type="Pfam" id="PF01171">
    <property type="entry name" value="ATP_bind_3"/>
    <property type="match status" value="1"/>
</dbReference>
<dbReference type="PIRSF" id="PIRSF004976">
    <property type="entry name" value="ATPase_YdaO"/>
    <property type="match status" value="1"/>
</dbReference>
<dbReference type="SUPFAM" id="SSF52402">
    <property type="entry name" value="Adenine nucleotide alpha hydrolases-like"/>
    <property type="match status" value="1"/>
</dbReference>
<sequence>MSQNQEISKKEQYNLNKLQKRLRRNVGEAIADFNMIEEGDRIMVCLSGGKDSYTMLEILRNLQQSAPINFSLVAVNLDQKQPGFPEHVLPEYLEKLGVEYKIVEENTYGIVKEKIPEGKTTCSLCSRLRRGILYRTATELGATKIALGHHRDDILQTLFLNMFYGGKMKGMPPKLMSDDGKHIVIRPLAYCREKDIQRFADAKAFPIIPCNLCGSQPNLQRQVIADMLRDWDKRYPGRIETMFSAMQNVVPSHLCDTNLFDFKGITHGSEVVNGGDLAFDREEIPLQPAGWQPEEDENQLDELRLNVVEVK</sequence>
<protein>
    <recommendedName>
        <fullName evidence="1">tRNA-cytidine(32) 2-sulfurtransferase</fullName>
        <ecNumber evidence="1">2.8.1.-</ecNumber>
    </recommendedName>
    <alternativeName>
        <fullName evidence="1">Two-thiocytidine biosynthesis protein A</fullName>
    </alternativeName>
    <alternativeName>
        <fullName evidence="1">tRNA 2-thiocytidine biosynthesis protein TtcA</fullName>
    </alternativeName>
</protein>
<accession>A7ZLH4</accession>
<proteinExistence type="inferred from homology"/>
<comment type="function">
    <text evidence="1">Catalyzes the ATP-dependent 2-thiolation of cytidine in position 32 of tRNA, to form 2-thiocytidine (s(2)C32). The sulfur atoms are provided by the cysteine/cysteine desulfurase (IscS) system.</text>
</comment>
<comment type="catalytic activity">
    <reaction evidence="1">
        <text>cytidine(32) in tRNA + S-sulfanyl-L-cysteinyl-[cysteine desulfurase] + AH2 + ATP = 2-thiocytidine(32) in tRNA + L-cysteinyl-[cysteine desulfurase] + A + AMP + diphosphate + H(+)</text>
        <dbReference type="Rhea" id="RHEA:57048"/>
        <dbReference type="Rhea" id="RHEA-COMP:10288"/>
        <dbReference type="Rhea" id="RHEA-COMP:12157"/>
        <dbReference type="Rhea" id="RHEA-COMP:12158"/>
        <dbReference type="Rhea" id="RHEA-COMP:14821"/>
        <dbReference type="ChEBI" id="CHEBI:13193"/>
        <dbReference type="ChEBI" id="CHEBI:15378"/>
        <dbReference type="ChEBI" id="CHEBI:17499"/>
        <dbReference type="ChEBI" id="CHEBI:29950"/>
        <dbReference type="ChEBI" id="CHEBI:30616"/>
        <dbReference type="ChEBI" id="CHEBI:33019"/>
        <dbReference type="ChEBI" id="CHEBI:61963"/>
        <dbReference type="ChEBI" id="CHEBI:82748"/>
        <dbReference type="ChEBI" id="CHEBI:141453"/>
        <dbReference type="ChEBI" id="CHEBI:456215"/>
    </reaction>
    <physiologicalReaction direction="left-to-right" evidence="1">
        <dbReference type="Rhea" id="RHEA:57049"/>
    </physiologicalReaction>
</comment>
<comment type="cofactor">
    <cofactor evidence="1">
        <name>Mg(2+)</name>
        <dbReference type="ChEBI" id="CHEBI:18420"/>
    </cofactor>
</comment>
<comment type="cofactor">
    <cofactor evidence="1">
        <name>[4Fe-4S] cluster</name>
        <dbReference type="ChEBI" id="CHEBI:49883"/>
    </cofactor>
    <text evidence="1">Binds 1 [4Fe-4S] cluster per subunit. The cluster is chelated by three Cys residues, the fourth Fe has a free coordination site that may bind a sulfur atom transferred from the persulfide of IscS.</text>
</comment>
<comment type="pathway">
    <text evidence="1">tRNA modification.</text>
</comment>
<comment type="subunit">
    <text evidence="1">Homodimer.</text>
</comment>
<comment type="subcellular location">
    <subcellularLocation>
        <location evidence="1">Cytoplasm</location>
    </subcellularLocation>
</comment>
<comment type="miscellaneous">
    <text evidence="1">The thiolation reaction likely consists of two steps: a first activation step by ATP to form an adenylated intermediate of the target base of tRNA, and a second nucleophilic substitution step of the sulfur (S) atom supplied by the hydrosulfide attached to the Fe-S cluster.</text>
</comment>
<comment type="similarity">
    <text evidence="1">Belongs to the TtcA family.</text>
</comment>
<gene>
    <name evidence="1" type="primary">ttcA</name>
    <name type="ordered locus">EcE24377A_1558</name>
</gene>
<feature type="chain" id="PRO_0000348721" description="tRNA-cytidine(32) 2-sulfurtransferase">
    <location>
        <begin position="1"/>
        <end position="311"/>
    </location>
</feature>
<feature type="short sequence motif" description="PP-loop motif" evidence="1">
    <location>
        <begin position="47"/>
        <end position="52"/>
    </location>
</feature>
<feature type="binding site" evidence="1">
    <location>
        <position position="122"/>
    </location>
    <ligand>
        <name>[4Fe-4S] cluster</name>
        <dbReference type="ChEBI" id="CHEBI:49883"/>
    </ligand>
</feature>
<feature type="binding site" evidence="1">
    <location>
        <position position="125"/>
    </location>
    <ligand>
        <name>[4Fe-4S] cluster</name>
        <dbReference type="ChEBI" id="CHEBI:49883"/>
    </ligand>
</feature>
<feature type="binding site" evidence="1">
    <location>
        <position position="213"/>
    </location>
    <ligand>
        <name>[4Fe-4S] cluster</name>
        <dbReference type="ChEBI" id="CHEBI:49883"/>
    </ligand>
</feature>